<reference key="1">
    <citation type="journal article" date="1990" name="J. Biol. Chem.">
        <title>Cloning, functional expression, and mRNA tissue distribution of the rat 5-hydroxytryptamine1A receptor gene.</title>
        <authorList>
            <person name="Albert P.R."/>
            <person name="Zhou Q.-Y."/>
            <person name="van Tol H.H.M."/>
            <person name="Bunzow J.R."/>
            <person name="Civelli O."/>
        </authorList>
    </citation>
    <scope>NUCLEOTIDE SEQUENCE [GENOMIC DNA]</scope>
    <scope>FUNCTION</scope>
    <scope>SUBCELLULAR LOCATION</scope>
    <scope>TISSUE SPECIFICITY</scope>
</reference>
<reference key="2">
    <citation type="journal article" date="1990" name="Life Sci.">
        <title>Role of cytochrome P450 in the control of the production of erythropoietin.</title>
        <authorList>
            <person name="Fujiwara Y."/>
            <person name="Nelson D.L."/>
            <person name="Kashihara K."/>
            <person name="Varga E."/>
            <person name="Roeske W.R."/>
            <person name="Yamamura H.I."/>
        </authorList>
    </citation>
    <scope>NUCLEOTIDE SEQUENCE [GENOMIC DNA]</scope>
</reference>
<reference key="3">
    <citation type="journal article" date="1990" name="Neuron">
        <title>Serotonin receptor activation reduces calcium current in an acutely dissociated adult central neuron.</title>
        <authorList>
            <person name="Penington N.J."/>
            <person name="Kelly J.S."/>
        </authorList>
    </citation>
    <scope>FUNCTION</scope>
</reference>
<reference key="4">
    <citation type="journal article" date="2008" name="J. Neurosci.">
        <title>Targeting of the 5-HT1A serotonin receptor to neuronal dendrites is mediated by Yif1B.</title>
        <authorList>
            <person name="Carrel D."/>
            <person name="Masson J."/>
            <person name="Al Awabdh S."/>
            <person name="Capra C.B."/>
            <person name="Lenkei Z."/>
            <person name="Hamon M."/>
            <person name="Emerit M.B."/>
            <person name="Darmon M."/>
        </authorList>
    </citation>
    <scope>TISSUE SPECIFICITY</scope>
    <scope>INTERACTION WITH YIF1B</scope>
    <scope>SUBCELLULAR LOCATION</scope>
</reference>
<gene>
    <name evidence="10" type="primary">Htr1a</name>
    <name type="synonym">5ht1a</name>
</gene>
<sequence>MDVFSFGQGNNTTASQEPFGTGGNVTSISDVTFSYQVITSLLLGTLIFCAVLGNACVVAAIALERSLQNVANYLIGSLAVTDLMVSVLVLPMAALYQVLNKWTLGQVTCDLFIALDVLCCTSSILHLCAIALDRYWAITDPIDYVNKRTPRRAAALISLTWLIGFLISIPPMLGWRTPEDRSDPDACTISKDHGYTIYSTFGAFYIPLLLMLVLYGRIFRAARFRIRKTVRKVEKKGAGTSLGTSSAPPPKKSLNGQPGSGDWRRCAENRAVGTPCTNGAVRQGDDEATLEVIEVHRVGNSKEHLPLPSESGSNSYAPACLERKNERNAEAKRKMALARERKTVKTLGIIMGTFILCWLPFFIVALVLPFCESSCHMPALLGAIINWLGYSNSLLNPVIYAYFNKDFQNAFKKIIKCKFCRR</sequence>
<comment type="function">
    <text evidence="1 7 8">G-protein coupled receptor for 5-hydroxytryptamine (serotonin) (PubMed:2140514, PubMed:2156831). Also functions as a receptor for various drugs and psychoactive substances (By similarity). Ligand binding causes a conformation change that triggers signaling via guanine nucleotide-binding proteins (G proteins) and modulates the activity of downstream effectors, such as adenylate cyclase (By similarity). HTR1A is coupled to G(i)/G(o) G alpha proteins and mediates inhibitory neurotransmission: signaling inhibits adenylate cyclase activity and activates a phosphatidylinositol-calcium second messenger system that regulates the release of Ca(2+) ions from intracellular stores (By similarity). Beta-arrestin family members regulate signaling by mediating both receptor desensitization and resensitization processes (By similarity).</text>
</comment>
<comment type="activity regulation">
    <text evidence="1">G-protein coupled receptor activity is regulated by lipids: phosphatidylinositol 4-phosphate increases HTR1A-mediated activity.</text>
</comment>
<comment type="subunit">
    <text evidence="1 6">Heterodimer; heterodimerizes with GPER1 (By similarity). Interacts with YIF1B (PubMed:18685031). Interacts with GPR39 and GALR1 (By similarity).</text>
</comment>
<comment type="interaction">
    <interactant intactId="EBI-6570156">
        <id>P19327</id>
    </interactant>
    <interactant intactId="EBI-2480918">
        <id>Q04589</id>
        <label>Fgfr1</label>
    </interactant>
    <organismsDiffer>false</organismsDiffer>
    <experiments>5</experiments>
</comment>
<comment type="subcellular location">
    <subcellularLocation>
        <location evidence="8">Cell membrane</location>
        <topology evidence="1">Multi-pass membrane protein</topology>
    </subcellularLocation>
    <subcellularLocation>
        <location evidence="6">Cell projection</location>
        <location evidence="6">Dendrite</location>
    </subcellularLocation>
</comment>
<comment type="tissue specificity">
    <text evidence="6 8">Detected in hypothalamus, mesencephalon, amygdala, medulla, thalamus, septum and hippocampus.</text>
</comment>
<comment type="similarity">
    <text evidence="4">Belongs to the G-protein coupled receptor 1 family. 5-hydroxytryptamine receptor subfamily. HTR1A sub-subfamily.</text>
</comment>
<keyword id="KW-0085">Behavior</keyword>
<keyword id="KW-1003">Cell membrane</keyword>
<keyword id="KW-0966">Cell projection</keyword>
<keyword id="KW-1015">Disulfide bond</keyword>
<keyword id="KW-0297">G-protein coupled receptor</keyword>
<keyword id="KW-0325">Glycoprotein</keyword>
<keyword id="KW-0472">Membrane</keyword>
<keyword id="KW-0675">Receptor</keyword>
<keyword id="KW-1185">Reference proteome</keyword>
<keyword id="KW-0807">Transducer</keyword>
<keyword id="KW-0812">Transmembrane</keyword>
<keyword id="KW-1133">Transmembrane helix</keyword>
<proteinExistence type="evidence at protein level"/>
<name>5HT1A_RAT</name>
<accession>P19327</accession>
<dbReference type="EMBL" id="J05276">
    <property type="protein sequence ID" value="AAA40612.1"/>
    <property type="molecule type" value="Genomic_DNA"/>
</dbReference>
<dbReference type="PIR" id="JH0315">
    <property type="entry name" value="JH0315"/>
</dbReference>
<dbReference type="RefSeq" id="NP_036717.1">
    <property type="nucleotide sequence ID" value="NM_012585.1"/>
</dbReference>
<dbReference type="SMR" id="P19327"/>
<dbReference type="CORUM" id="P19327"/>
<dbReference type="FunCoup" id="P19327">
    <property type="interactions" value="408"/>
</dbReference>
<dbReference type="IntAct" id="P19327">
    <property type="interactions" value="2"/>
</dbReference>
<dbReference type="STRING" id="10116.ENSRNOP00000013618"/>
<dbReference type="BindingDB" id="P19327"/>
<dbReference type="ChEMBL" id="CHEMBL273"/>
<dbReference type="DrugCentral" id="P19327"/>
<dbReference type="GuidetoPHARMACOLOGY" id="1"/>
<dbReference type="GlyCosmos" id="P19327">
    <property type="glycosylation" value="3 sites, No reported glycans"/>
</dbReference>
<dbReference type="GlyGen" id="P19327">
    <property type="glycosylation" value="3 sites"/>
</dbReference>
<dbReference type="iPTMnet" id="P19327"/>
<dbReference type="PhosphoSitePlus" id="P19327"/>
<dbReference type="PaxDb" id="10116-ENSRNOP00000013618"/>
<dbReference type="GeneID" id="24473"/>
<dbReference type="KEGG" id="rno:24473"/>
<dbReference type="UCSC" id="RGD:2845">
    <property type="organism name" value="rat"/>
</dbReference>
<dbReference type="AGR" id="RGD:2845"/>
<dbReference type="CTD" id="3350"/>
<dbReference type="RGD" id="2845">
    <property type="gene designation" value="Htr1a"/>
</dbReference>
<dbReference type="eggNOG" id="KOG3656">
    <property type="taxonomic scope" value="Eukaryota"/>
</dbReference>
<dbReference type="InParanoid" id="P19327"/>
<dbReference type="PhylomeDB" id="P19327"/>
<dbReference type="Reactome" id="R-RNO-390666">
    <property type="pathway name" value="Serotonin receptors"/>
</dbReference>
<dbReference type="PRO" id="PR:P19327"/>
<dbReference type="Proteomes" id="UP000002494">
    <property type="component" value="Unplaced"/>
</dbReference>
<dbReference type="GO" id="GO:0043203">
    <property type="term" value="C:axon hillock"/>
    <property type="evidence" value="ECO:0000314"/>
    <property type="project" value="RGD"/>
</dbReference>
<dbReference type="GO" id="GO:0030425">
    <property type="term" value="C:dendrite"/>
    <property type="evidence" value="ECO:0000318"/>
    <property type="project" value="GO_Central"/>
</dbReference>
<dbReference type="GO" id="GO:0098982">
    <property type="term" value="C:GABA-ergic synapse"/>
    <property type="evidence" value="ECO:0000314"/>
    <property type="project" value="SynGO"/>
</dbReference>
<dbReference type="GO" id="GO:0043025">
    <property type="term" value="C:neuronal cell body"/>
    <property type="evidence" value="ECO:0000314"/>
    <property type="project" value="RGD"/>
</dbReference>
<dbReference type="GO" id="GO:0005886">
    <property type="term" value="C:plasma membrane"/>
    <property type="evidence" value="ECO:0000250"/>
    <property type="project" value="UniProtKB"/>
</dbReference>
<dbReference type="GO" id="GO:0042734">
    <property type="term" value="C:presynaptic membrane"/>
    <property type="evidence" value="ECO:0000314"/>
    <property type="project" value="SynGO"/>
</dbReference>
<dbReference type="GO" id="GO:0004993">
    <property type="term" value="F:G protein-coupled serotonin receptor activity"/>
    <property type="evidence" value="ECO:0000314"/>
    <property type="project" value="RGD"/>
</dbReference>
<dbReference type="GO" id="GO:0001965">
    <property type="term" value="F:G-protein alpha-subunit binding"/>
    <property type="evidence" value="ECO:0000353"/>
    <property type="project" value="RGD"/>
</dbReference>
<dbReference type="GO" id="GO:0001586">
    <property type="term" value="F:Gi/o-coupled serotonin receptor activity"/>
    <property type="evidence" value="ECO:0000266"/>
    <property type="project" value="RGD"/>
</dbReference>
<dbReference type="GO" id="GO:0030594">
    <property type="term" value="F:neurotransmitter receptor activity"/>
    <property type="evidence" value="ECO:0000318"/>
    <property type="project" value="GO_Central"/>
</dbReference>
<dbReference type="GO" id="GO:0090722">
    <property type="term" value="F:receptor-receptor interaction"/>
    <property type="evidence" value="ECO:0000266"/>
    <property type="project" value="RGD"/>
</dbReference>
<dbReference type="GO" id="GO:0051378">
    <property type="term" value="F:serotonin binding"/>
    <property type="evidence" value="ECO:0000314"/>
    <property type="project" value="RGD"/>
</dbReference>
<dbReference type="GO" id="GO:0099589">
    <property type="term" value="F:serotonin receptor activity"/>
    <property type="evidence" value="ECO:0000266"/>
    <property type="project" value="RGD"/>
</dbReference>
<dbReference type="GO" id="GO:0005102">
    <property type="term" value="F:signaling receptor binding"/>
    <property type="evidence" value="ECO:0000353"/>
    <property type="project" value="RGD"/>
</dbReference>
<dbReference type="GO" id="GO:0007198">
    <property type="term" value="P:adenylate cyclase-inhibiting serotonin receptor signaling pathway"/>
    <property type="evidence" value="ECO:0000315"/>
    <property type="project" value="RGD"/>
</dbReference>
<dbReference type="GO" id="GO:0001662">
    <property type="term" value="P:behavioral fear response"/>
    <property type="evidence" value="ECO:0000250"/>
    <property type="project" value="UniProtKB"/>
</dbReference>
<dbReference type="GO" id="GO:0035095">
    <property type="term" value="P:behavioral response to nicotine"/>
    <property type="evidence" value="ECO:0000270"/>
    <property type="project" value="RGD"/>
</dbReference>
<dbReference type="GO" id="GO:0007268">
    <property type="term" value="P:chemical synaptic transmission"/>
    <property type="evidence" value="ECO:0000318"/>
    <property type="project" value="GO_Central"/>
</dbReference>
<dbReference type="GO" id="GO:0035640">
    <property type="term" value="P:exploration behavior"/>
    <property type="evidence" value="ECO:0000250"/>
    <property type="project" value="UniProtKB"/>
</dbReference>
<dbReference type="GO" id="GO:0007186">
    <property type="term" value="P:G protein-coupled receptor signaling pathway"/>
    <property type="evidence" value="ECO:0000266"/>
    <property type="project" value="RGD"/>
</dbReference>
<dbReference type="GO" id="GO:0007187">
    <property type="term" value="P:G protein-coupled receptor signaling pathway, coupled to cyclic nucleotide second messenger"/>
    <property type="evidence" value="ECO:0000318"/>
    <property type="project" value="GO_Central"/>
</dbReference>
<dbReference type="GO" id="GO:0007214">
    <property type="term" value="P:gamma-aminobutyric acid signaling pathway"/>
    <property type="evidence" value="ECO:0000266"/>
    <property type="project" value="RGD"/>
</dbReference>
<dbReference type="GO" id="GO:0014053">
    <property type="term" value="P:negative regulation of gamma-aminobutyric acid secretion"/>
    <property type="evidence" value="ECO:0000315"/>
    <property type="project" value="CACAO"/>
</dbReference>
<dbReference type="GO" id="GO:0097114">
    <property type="term" value="P:NMDA glutamate receptor clustering"/>
    <property type="evidence" value="ECO:0000314"/>
    <property type="project" value="RGD"/>
</dbReference>
<dbReference type="GO" id="GO:0031117">
    <property type="term" value="P:positive regulation of microtubule depolymerization"/>
    <property type="evidence" value="ECO:0000314"/>
    <property type="project" value="RGD"/>
</dbReference>
<dbReference type="GO" id="GO:0099171">
    <property type="term" value="P:presynaptic modulation of chemical synaptic transmission"/>
    <property type="evidence" value="ECO:0000314"/>
    <property type="project" value="SynGO"/>
</dbReference>
<dbReference type="GO" id="GO:0042053">
    <property type="term" value="P:regulation of dopamine metabolic process"/>
    <property type="evidence" value="ECO:0000250"/>
    <property type="project" value="UniProtKB"/>
</dbReference>
<dbReference type="GO" id="GO:0060259">
    <property type="term" value="P:regulation of feeding behavior"/>
    <property type="evidence" value="ECO:0000314"/>
    <property type="project" value="RGD"/>
</dbReference>
<dbReference type="GO" id="GO:0046883">
    <property type="term" value="P:regulation of hormone secretion"/>
    <property type="evidence" value="ECO:0007669"/>
    <property type="project" value="InterPro"/>
</dbReference>
<dbReference type="GO" id="GO:0014062">
    <property type="term" value="P:regulation of serotonin secretion"/>
    <property type="evidence" value="ECO:0000250"/>
    <property type="project" value="UniProtKB"/>
</dbReference>
<dbReference type="GO" id="GO:0019229">
    <property type="term" value="P:regulation of vasoconstriction"/>
    <property type="evidence" value="ECO:0007669"/>
    <property type="project" value="InterPro"/>
</dbReference>
<dbReference type="GO" id="GO:0097305">
    <property type="term" value="P:response to alcohol"/>
    <property type="evidence" value="ECO:0000270"/>
    <property type="project" value="RGD"/>
</dbReference>
<dbReference type="GO" id="GO:1903416">
    <property type="term" value="P:response to glycoside"/>
    <property type="evidence" value="ECO:0000270"/>
    <property type="project" value="RGD"/>
</dbReference>
<dbReference type="GO" id="GO:0043278">
    <property type="term" value="P:response to morphine"/>
    <property type="evidence" value="ECO:0000270"/>
    <property type="project" value="RGD"/>
</dbReference>
<dbReference type="GO" id="GO:0042428">
    <property type="term" value="P:serotonin metabolic process"/>
    <property type="evidence" value="ECO:0000250"/>
    <property type="project" value="UniProtKB"/>
</dbReference>
<dbReference type="GO" id="GO:0007210">
    <property type="term" value="P:serotonin receptor signaling pathway"/>
    <property type="evidence" value="ECO:0000315"/>
    <property type="project" value="RGD"/>
</dbReference>
<dbReference type="GO" id="GO:0071625">
    <property type="term" value="P:vocalization behavior"/>
    <property type="evidence" value="ECO:0000314"/>
    <property type="project" value="RGD"/>
</dbReference>
<dbReference type="CDD" id="cd15330">
    <property type="entry name" value="7tmA_5-HT1A_vertebrates"/>
    <property type="match status" value="1"/>
</dbReference>
<dbReference type="Gene3D" id="1.20.1070.10">
    <property type="entry name" value="Rhodopsin 7-helix transmembrane proteins"/>
    <property type="match status" value="1"/>
</dbReference>
<dbReference type="InterPro" id="IPR000610">
    <property type="entry name" value="5HT1A_rcpt"/>
</dbReference>
<dbReference type="InterPro" id="IPR002231">
    <property type="entry name" value="5HT_rcpt"/>
</dbReference>
<dbReference type="InterPro" id="IPR000276">
    <property type="entry name" value="GPCR_Rhodpsn"/>
</dbReference>
<dbReference type="InterPro" id="IPR017452">
    <property type="entry name" value="GPCR_Rhodpsn_7TM"/>
</dbReference>
<dbReference type="PANTHER" id="PTHR24248:SF191">
    <property type="entry name" value="5-HYDROXYTRYPTAMINE RECEPTOR 1A"/>
    <property type="match status" value="1"/>
</dbReference>
<dbReference type="PANTHER" id="PTHR24248">
    <property type="entry name" value="ADRENERGIC RECEPTOR-RELATED G-PROTEIN COUPLED RECEPTOR"/>
    <property type="match status" value="1"/>
</dbReference>
<dbReference type="Pfam" id="PF00001">
    <property type="entry name" value="7tm_1"/>
    <property type="match status" value="1"/>
</dbReference>
<dbReference type="PRINTS" id="PR00512">
    <property type="entry name" value="5HT1ARECEPTR"/>
</dbReference>
<dbReference type="PRINTS" id="PR01101">
    <property type="entry name" value="5HTRECEPTOR"/>
</dbReference>
<dbReference type="PRINTS" id="PR00237">
    <property type="entry name" value="GPCRRHODOPSN"/>
</dbReference>
<dbReference type="SMART" id="SM01381">
    <property type="entry name" value="7TM_GPCR_Srsx"/>
    <property type="match status" value="1"/>
</dbReference>
<dbReference type="SUPFAM" id="SSF81321">
    <property type="entry name" value="Family A G protein-coupled receptor-like"/>
    <property type="match status" value="1"/>
</dbReference>
<dbReference type="PROSITE" id="PS00237">
    <property type="entry name" value="G_PROTEIN_RECEP_F1_1"/>
    <property type="match status" value="1"/>
</dbReference>
<dbReference type="PROSITE" id="PS50262">
    <property type="entry name" value="G_PROTEIN_RECEP_F1_2"/>
    <property type="match status" value="1"/>
</dbReference>
<evidence type="ECO:0000250" key="1">
    <source>
        <dbReference type="UniProtKB" id="P08908"/>
    </source>
</evidence>
<evidence type="ECO:0000250" key="2">
    <source>
        <dbReference type="UniProtKB" id="P41595"/>
    </source>
</evidence>
<evidence type="ECO:0000255" key="3"/>
<evidence type="ECO:0000255" key="4">
    <source>
        <dbReference type="PROSITE-ProRule" id="PRU00521"/>
    </source>
</evidence>
<evidence type="ECO:0000256" key="5">
    <source>
        <dbReference type="SAM" id="MobiDB-lite"/>
    </source>
</evidence>
<evidence type="ECO:0000269" key="6">
    <source>
    </source>
</evidence>
<evidence type="ECO:0000269" key="7">
    <source>
    </source>
</evidence>
<evidence type="ECO:0000269" key="8">
    <source>
    </source>
</evidence>
<evidence type="ECO:0000305" key="9"/>
<evidence type="ECO:0000312" key="10">
    <source>
        <dbReference type="RGD" id="2845"/>
    </source>
</evidence>
<protein>
    <recommendedName>
        <fullName evidence="9">5-hydroxytryptamine receptor 1A</fullName>
        <shortName>5-HT-1A</shortName>
        <shortName>5-HT1A</shortName>
    </recommendedName>
    <alternativeName>
        <fullName>Serotonin receptor 1A</fullName>
    </alternativeName>
</protein>
<feature type="chain" id="PRO_0000068907" description="5-hydroxytryptamine receptor 1A">
    <location>
        <begin position="1"/>
        <end position="422"/>
    </location>
</feature>
<feature type="topological domain" description="Extracellular" evidence="1">
    <location>
        <begin position="1"/>
        <end position="38"/>
    </location>
</feature>
<feature type="transmembrane region" description="Helical; Name=1" evidence="1">
    <location>
        <begin position="39"/>
        <end position="59"/>
    </location>
</feature>
<feature type="topological domain" description="Cytoplasmic" evidence="1">
    <location>
        <begin position="60"/>
        <end position="73"/>
    </location>
</feature>
<feature type="transmembrane region" description="Helical; Name=2" evidence="1">
    <location>
        <begin position="74"/>
        <end position="98"/>
    </location>
</feature>
<feature type="topological domain" description="Extracellular" evidence="1">
    <location>
        <begin position="99"/>
        <end position="107"/>
    </location>
</feature>
<feature type="transmembrane region" description="Helical; Name=3" evidence="1">
    <location>
        <begin position="108"/>
        <end position="132"/>
    </location>
</feature>
<feature type="topological domain" description="Cytoplasmic" evidence="1">
    <location>
        <begin position="133"/>
        <end position="152"/>
    </location>
</feature>
<feature type="transmembrane region" description="Helical; Name=4" evidence="1">
    <location>
        <begin position="153"/>
        <end position="174"/>
    </location>
</feature>
<feature type="topological domain" description="Extracellular" evidence="1">
    <location>
        <begin position="175"/>
        <end position="193"/>
    </location>
</feature>
<feature type="transmembrane region" description="Helical; Name=5" evidence="1">
    <location>
        <begin position="194"/>
        <end position="216"/>
    </location>
</feature>
<feature type="topological domain" description="Cytoplasmic" evidence="1">
    <location>
        <begin position="217"/>
        <end position="346"/>
    </location>
</feature>
<feature type="transmembrane region" description="Helical; Name=6" evidence="1">
    <location>
        <begin position="347"/>
        <end position="370"/>
    </location>
</feature>
<feature type="topological domain" description="Extracellular" evidence="1">
    <location>
        <begin position="371"/>
        <end position="378"/>
    </location>
</feature>
<feature type="transmembrane region" description="Helical; Name=7" evidence="1">
    <location>
        <begin position="379"/>
        <end position="403"/>
    </location>
</feature>
<feature type="topological domain" description="Cytoplasmic" evidence="1">
    <location>
        <begin position="404"/>
        <end position="422"/>
    </location>
</feature>
<feature type="region of interest" description="Disordered" evidence="5">
    <location>
        <begin position="235"/>
        <end position="261"/>
    </location>
</feature>
<feature type="short sequence motif" description="DRY motif; important for ligand-induced conformation changes" evidence="2">
    <location>
        <begin position="133"/>
        <end position="135"/>
    </location>
</feature>
<feature type="short sequence motif" description="NPxxY motif; important for ligand-induced conformation changes and signaling" evidence="2">
    <location>
        <begin position="396"/>
        <end position="400"/>
    </location>
</feature>
<feature type="binding site" evidence="1">
    <location>
        <position position="116"/>
    </location>
    <ligand>
        <name>serotonin</name>
        <dbReference type="ChEBI" id="CHEBI:350546"/>
    </ligand>
</feature>
<feature type="binding site" evidence="1">
    <location>
        <position position="120"/>
    </location>
    <ligand>
        <name>serotonin</name>
        <dbReference type="ChEBI" id="CHEBI:350546"/>
    </ligand>
</feature>
<feature type="binding site" evidence="1">
    <location>
        <position position="345"/>
    </location>
    <ligand>
        <name>1D-myo-inositol 4-phosphate</name>
        <dbReference type="ChEBI" id="CHEBI:58469"/>
    </ligand>
</feature>
<feature type="binding site" evidence="1">
    <location>
        <position position="346"/>
    </location>
    <ligand>
        <name>1D-myo-inositol 4-phosphate</name>
        <dbReference type="ChEBI" id="CHEBI:58469"/>
    </ligand>
</feature>
<feature type="binding site" evidence="1">
    <location>
        <position position="352"/>
    </location>
    <ligand>
        <name>1D-myo-inositol 4-phosphate</name>
        <dbReference type="ChEBI" id="CHEBI:58469"/>
    </ligand>
</feature>
<feature type="binding site" evidence="1">
    <location>
        <position position="403"/>
    </location>
    <ligand>
        <name>1D-myo-inositol 4-phosphate</name>
        <dbReference type="ChEBI" id="CHEBI:58469"/>
    </ligand>
</feature>
<feature type="binding site" evidence="1">
    <location>
        <position position="404"/>
    </location>
    <ligand>
        <name>1D-myo-inositol 4-phosphate</name>
        <dbReference type="ChEBI" id="CHEBI:58469"/>
    </ligand>
</feature>
<feature type="binding site" evidence="1">
    <location>
        <position position="405"/>
    </location>
    <ligand>
        <name>1D-myo-inositol 4-phosphate</name>
        <dbReference type="ChEBI" id="CHEBI:58469"/>
    </ligand>
</feature>
<feature type="glycosylation site" description="N-linked (GlcNAc...) asparagine" evidence="3">
    <location>
        <position position="10"/>
    </location>
</feature>
<feature type="glycosylation site" description="N-linked (GlcNAc...) asparagine" evidence="3">
    <location>
        <position position="11"/>
    </location>
</feature>
<feature type="glycosylation site" description="N-linked (GlcNAc...) asparagine" evidence="3">
    <location>
        <position position="24"/>
    </location>
</feature>
<feature type="disulfide bond" evidence="4">
    <location>
        <begin position="109"/>
        <end position="187"/>
    </location>
</feature>
<feature type="sequence conflict" description="In Ref. 2." evidence="9" ref="2">
    <original>S</original>
    <variation>N</variation>
    <location>
        <position position="373"/>
    </location>
</feature>
<organism>
    <name type="scientific">Rattus norvegicus</name>
    <name type="common">Rat</name>
    <dbReference type="NCBI Taxonomy" id="10116"/>
    <lineage>
        <taxon>Eukaryota</taxon>
        <taxon>Metazoa</taxon>
        <taxon>Chordata</taxon>
        <taxon>Craniata</taxon>
        <taxon>Vertebrata</taxon>
        <taxon>Euteleostomi</taxon>
        <taxon>Mammalia</taxon>
        <taxon>Eutheria</taxon>
        <taxon>Euarchontoglires</taxon>
        <taxon>Glires</taxon>
        <taxon>Rodentia</taxon>
        <taxon>Myomorpha</taxon>
        <taxon>Muroidea</taxon>
        <taxon>Muridae</taxon>
        <taxon>Murinae</taxon>
        <taxon>Rattus</taxon>
    </lineage>
</organism>